<name>LEPA_SYNAS</name>
<keyword id="KW-0997">Cell inner membrane</keyword>
<keyword id="KW-1003">Cell membrane</keyword>
<keyword id="KW-0342">GTP-binding</keyword>
<keyword id="KW-0378">Hydrolase</keyword>
<keyword id="KW-0472">Membrane</keyword>
<keyword id="KW-0547">Nucleotide-binding</keyword>
<keyword id="KW-0648">Protein biosynthesis</keyword>
<keyword id="KW-1185">Reference proteome</keyword>
<feature type="chain" id="PRO_0000265721" description="Elongation factor 4">
    <location>
        <begin position="1"/>
        <end position="598"/>
    </location>
</feature>
<feature type="domain" description="tr-type G">
    <location>
        <begin position="2"/>
        <end position="184"/>
    </location>
</feature>
<feature type="binding site" evidence="1">
    <location>
        <begin position="14"/>
        <end position="19"/>
    </location>
    <ligand>
        <name>GTP</name>
        <dbReference type="ChEBI" id="CHEBI:37565"/>
    </ligand>
</feature>
<feature type="binding site" evidence="1">
    <location>
        <begin position="131"/>
        <end position="134"/>
    </location>
    <ligand>
        <name>GTP</name>
        <dbReference type="ChEBI" id="CHEBI:37565"/>
    </ligand>
</feature>
<comment type="function">
    <text evidence="1">Required for accurate and efficient protein synthesis under certain stress conditions. May act as a fidelity factor of the translation reaction, by catalyzing a one-codon backward translocation of tRNAs on improperly translocated ribosomes. Back-translocation proceeds from a post-translocation (POST) complex to a pre-translocation (PRE) complex, thus giving elongation factor G a second chance to translocate the tRNAs correctly. Binds to ribosomes in a GTP-dependent manner.</text>
</comment>
<comment type="catalytic activity">
    <reaction evidence="1">
        <text>GTP + H2O = GDP + phosphate + H(+)</text>
        <dbReference type="Rhea" id="RHEA:19669"/>
        <dbReference type="ChEBI" id="CHEBI:15377"/>
        <dbReference type="ChEBI" id="CHEBI:15378"/>
        <dbReference type="ChEBI" id="CHEBI:37565"/>
        <dbReference type="ChEBI" id="CHEBI:43474"/>
        <dbReference type="ChEBI" id="CHEBI:58189"/>
        <dbReference type="EC" id="3.6.5.n1"/>
    </reaction>
</comment>
<comment type="subcellular location">
    <subcellularLocation>
        <location evidence="1">Cell inner membrane</location>
        <topology evidence="1">Peripheral membrane protein</topology>
        <orientation evidence="1">Cytoplasmic side</orientation>
    </subcellularLocation>
</comment>
<comment type="similarity">
    <text evidence="1">Belongs to the TRAFAC class translation factor GTPase superfamily. Classic translation factor GTPase family. LepA subfamily.</text>
</comment>
<gene>
    <name evidence="1" type="primary">lepA</name>
    <name type="ordered locus">SYNAS_15600</name>
    <name type="ORF">SYN_02187</name>
</gene>
<organism>
    <name type="scientific">Syntrophus aciditrophicus (strain SB)</name>
    <dbReference type="NCBI Taxonomy" id="56780"/>
    <lineage>
        <taxon>Bacteria</taxon>
        <taxon>Pseudomonadati</taxon>
        <taxon>Thermodesulfobacteriota</taxon>
        <taxon>Syntrophia</taxon>
        <taxon>Syntrophales</taxon>
        <taxon>Syntrophaceae</taxon>
        <taxon>Syntrophus</taxon>
    </lineage>
</organism>
<protein>
    <recommendedName>
        <fullName evidence="1">Elongation factor 4</fullName>
        <shortName evidence="1">EF-4</shortName>
        <ecNumber evidence="1">3.6.5.n1</ecNumber>
    </recommendedName>
    <alternativeName>
        <fullName evidence="1">Ribosomal back-translocase LepA</fullName>
    </alternativeName>
</protein>
<evidence type="ECO:0000255" key="1">
    <source>
        <dbReference type="HAMAP-Rule" id="MF_00071"/>
    </source>
</evidence>
<reference key="1">
    <citation type="journal article" date="2007" name="Proc. Natl. Acad. Sci. U.S.A.">
        <title>The genome of Syntrophus aciditrophicus: life at the thermodynamic limit of microbial growth.</title>
        <authorList>
            <person name="McInerney M.J."/>
            <person name="Rohlin L."/>
            <person name="Mouttaki H."/>
            <person name="Kim U."/>
            <person name="Krupp R.S."/>
            <person name="Rios-Hernandez L."/>
            <person name="Sieber J."/>
            <person name="Struchtemeyer C.G."/>
            <person name="Bhattacharyya A."/>
            <person name="Campbell J.W."/>
            <person name="Gunsalus R.P."/>
        </authorList>
    </citation>
    <scope>NUCLEOTIDE SEQUENCE [LARGE SCALE GENOMIC DNA]</scope>
    <source>
        <strain>SB</strain>
    </source>
</reference>
<sequence length="598" mass="67016">MDHIRNFSIIAHIDHGKSTLADRLIQFTGISDERTFKDQMLDNMDIERERGITIKSQAITLPYQAKDGKTYSLNLIDTPGHVDFSYEVSRALASCEGVLLLIDAAQGVQAQTVANLYLAMEHNLEIIPVINKIDLPSADVERVIEQIDDELGLDSEGHLKCSAKAGIGIQDILEAIVKRVPPPRGNPEAPLAALIFDAHYDPFRGTIIHCRIMEGTVKSGDTIRFMSNSATYRVEEVGHFLLQREKRNCLSAGEVGYIIAGVKTVSDVRTGDTITLDDRPCSQPLPGFREVKPVVFASIYPIASDDYDDLKAALEKYQLNDASFIYQKDSSAALGQGFRCGFLGLLHLEVVQERLEREYDQSIILSVPSVRYRFTLKDGSVVYVDNPAHYPGSSSIELSEEPYIRATLMLPERYLGAVMKLCMEKRGVNSTLNYPSPGRVELLYEMPLAEVIYDFYDRFKSVTQGYGSFDYELIDYRESQLVLLDILVNGERVDALSQIVHRDRARARGLQACERLKEEIPRQMFKIAIQGAIGGEIISRTTITPFRKDVIAKCYGGDISRKRKLLEKQKKGKKRMKMIGQVSIPQSAFLSVLKSDAD</sequence>
<proteinExistence type="inferred from homology"/>
<dbReference type="EC" id="3.6.5.n1" evidence="1"/>
<dbReference type="EMBL" id="CP000252">
    <property type="protein sequence ID" value="ABC77439.1"/>
    <property type="molecule type" value="Genomic_DNA"/>
</dbReference>
<dbReference type="RefSeq" id="WP_011417461.1">
    <property type="nucleotide sequence ID" value="NC_007759.1"/>
</dbReference>
<dbReference type="SMR" id="Q2LTN3"/>
<dbReference type="FunCoup" id="Q2LTN3">
    <property type="interactions" value="490"/>
</dbReference>
<dbReference type="STRING" id="56780.SYN_02187"/>
<dbReference type="KEGG" id="sat:SYN_02187"/>
<dbReference type="eggNOG" id="COG0481">
    <property type="taxonomic scope" value="Bacteria"/>
</dbReference>
<dbReference type="HOGENOM" id="CLU_009995_3_3_7"/>
<dbReference type="InParanoid" id="Q2LTN3"/>
<dbReference type="OrthoDB" id="9801472at2"/>
<dbReference type="Proteomes" id="UP000001933">
    <property type="component" value="Chromosome"/>
</dbReference>
<dbReference type="GO" id="GO:0005886">
    <property type="term" value="C:plasma membrane"/>
    <property type="evidence" value="ECO:0007669"/>
    <property type="project" value="UniProtKB-SubCell"/>
</dbReference>
<dbReference type="GO" id="GO:0005525">
    <property type="term" value="F:GTP binding"/>
    <property type="evidence" value="ECO:0007669"/>
    <property type="project" value="UniProtKB-UniRule"/>
</dbReference>
<dbReference type="GO" id="GO:0003924">
    <property type="term" value="F:GTPase activity"/>
    <property type="evidence" value="ECO:0007669"/>
    <property type="project" value="UniProtKB-UniRule"/>
</dbReference>
<dbReference type="GO" id="GO:0043022">
    <property type="term" value="F:ribosome binding"/>
    <property type="evidence" value="ECO:0007669"/>
    <property type="project" value="UniProtKB-UniRule"/>
</dbReference>
<dbReference type="GO" id="GO:0003746">
    <property type="term" value="F:translation elongation factor activity"/>
    <property type="evidence" value="ECO:0007669"/>
    <property type="project" value="UniProtKB-UniRule"/>
</dbReference>
<dbReference type="GO" id="GO:0045727">
    <property type="term" value="P:positive regulation of translation"/>
    <property type="evidence" value="ECO:0007669"/>
    <property type="project" value="UniProtKB-UniRule"/>
</dbReference>
<dbReference type="CDD" id="cd03699">
    <property type="entry name" value="EF4_II"/>
    <property type="match status" value="1"/>
</dbReference>
<dbReference type="CDD" id="cd16260">
    <property type="entry name" value="EF4_III"/>
    <property type="match status" value="1"/>
</dbReference>
<dbReference type="CDD" id="cd01890">
    <property type="entry name" value="LepA"/>
    <property type="match status" value="1"/>
</dbReference>
<dbReference type="CDD" id="cd03709">
    <property type="entry name" value="lepA_C"/>
    <property type="match status" value="1"/>
</dbReference>
<dbReference type="FunFam" id="3.40.50.300:FF:000078">
    <property type="entry name" value="Elongation factor 4"/>
    <property type="match status" value="1"/>
</dbReference>
<dbReference type="FunFam" id="2.40.30.10:FF:000015">
    <property type="entry name" value="Translation factor GUF1, mitochondrial"/>
    <property type="match status" value="1"/>
</dbReference>
<dbReference type="FunFam" id="3.30.70.240:FF:000007">
    <property type="entry name" value="Translation factor GUF1, mitochondrial"/>
    <property type="match status" value="1"/>
</dbReference>
<dbReference type="FunFam" id="3.30.70.2570:FF:000001">
    <property type="entry name" value="Translation factor GUF1, mitochondrial"/>
    <property type="match status" value="1"/>
</dbReference>
<dbReference type="FunFam" id="3.30.70.870:FF:000004">
    <property type="entry name" value="Translation factor GUF1, mitochondrial"/>
    <property type="match status" value="1"/>
</dbReference>
<dbReference type="Gene3D" id="3.30.70.240">
    <property type="match status" value="1"/>
</dbReference>
<dbReference type="Gene3D" id="3.30.70.2570">
    <property type="entry name" value="Elongation factor 4, C-terminal domain"/>
    <property type="match status" value="1"/>
</dbReference>
<dbReference type="Gene3D" id="3.30.70.870">
    <property type="entry name" value="Elongation Factor G (Translational Gtpase), domain 3"/>
    <property type="match status" value="1"/>
</dbReference>
<dbReference type="Gene3D" id="3.40.50.300">
    <property type="entry name" value="P-loop containing nucleotide triphosphate hydrolases"/>
    <property type="match status" value="1"/>
</dbReference>
<dbReference type="Gene3D" id="2.40.30.10">
    <property type="entry name" value="Translation factors"/>
    <property type="match status" value="1"/>
</dbReference>
<dbReference type="HAMAP" id="MF_00071">
    <property type="entry name" value="LepA"/>
    <property type="match status" value="1"/>
</dbReference>
<dbReference type="InterPro" id="IPR006297">
    <property type="entry name" value="EF-4"/>
</dbReference>
<dbReference type="InterPro" id="IPR041095">
    <property type="entry name" value="EFG_II"/>
</dbReference>
<dbReference type="InterPro" id="IPR035647">
    <property type="entry name" value="EFG_III/V"/>
</dbReference>
<dbReference type="InterPro" id="IPR000640">
    <property type="entry name" value="EFG_V-like"/>
</dbReference>
<dbReference type="InterPro" id="IPR004161">
    <property type="entry name" value="EFTu-like_2"/>
</dbReference>
<dbReference type="InterPro" id="IPR031157">
    <property type="entry name" value="G_TR_CS"/>
</dbReference>
<dbReference type="InterPro" id="IPR038363">
    <property type="entry name" value="LepA_C_sf"/>
</dbReference>
<dbReference type="InterPro" id="IPR013842">
    <property type="entry name" value="LepA_CTD"/>
</dbReference>
<dbReference type="InterPro" id="IPR035654">
    <property type="entry name" value="LepA_IV"/>
</dbReference>
<dbReference type="InterPro" id="IPR027417">
    <property type="entry name" value="P-loop_NTPase"/>
</dbReference>
<dbReference type="InterPro" id="IPR005225">
    <property type="entry name" value="Small_GTP-bd"/>
</dbReference>
<dbReference type="InterPro" id="IPR000795">
    <property type="entry name" value="T_Tr_GTP-bd_dom"/>
</dbReference>
<dbReference type="NCBIfam" id="TIGR01393">
    <property type="entry name" value="lepA"/>
    <property type="match status" value="1"/>
</dbReference>
<dbReference type="NCBIfam" id="TIGR00231">
    <property type="entry name" value="small_GTP"/>
    <property type="match status" value="1"/>
</dbReference>
<dbReference type="PANTHER" id="PTHR43512:SF4">
    <property type="entry name" value="TRANSLATION FACTOR GUF1 HOMOLOG, CHLOROPLASTIC"/>
    <property type="match status" value="1"/>
</dbReference>
<dbReference type="PANTHER" id="PTHR43512">
    <property type="entry name" value="TRANSLATION FACTOR GUF1-RELATED"/>
    <property type="match status" value="1"/>
</dbReference>
<dbReference type="Pfam" id="PF00679">
    <property type="entry name" value="EFG_C"/>
    <property type="match status" value="1"/>
</dbReference>
<dbReference type="Pfam" id="PF14492">
    <property type="entry name" value="EFG_III"/>
    <property type="match status" value="1"/>
</dbReference>
<dbReference type="Pfam" id="PF00009">
    <property type="entry name" value="GTP_EFTU"/>
    <property type="match status" value="1"/>
</dbReference>
<dbReference type="Pfam" id="PF03144">
    <property type="entry name" value="GTP_EFTU_D2"/>
    <property type="match status" value="1"/>
</dbReference>
<dbReference type="Pfam" id="PF06421">
    <property type="entry name" value="LepA_C"/>
    <property type="match status" value="1"/>
</dbReference>
<dbReference type="PRINTS" id="PR00315">
    <property type="entry name" value="ELONGATNFCT"/>
</dbReference>
<dbReference type="SUPFAM" id="SSF54980">
    <property type="entry name" value="EF-G C-terminal domain-like"/>
    <property type="match status" value="2"/>
</dbReference>
<dbReference type="SUPFAM" id="SSF52540">
    <property type="entry name" value="P-loop containing nucleoside triphosphate hydrolases"/>
    <property type="match status" value="1"/>
</dbReference>
<dbReference type="PROSITE" id="PS00301">
    <property type="entry name" value="G_TR_1"/>
    <property type="match status" value="1"/>
</dbReference>
<dbReference type="PROSITE" id="PS51722">
    <property type="entry name" value="G_TR_2"/>
    <property type="match status" value="1"/>
</dbReference>
<accession>Q2LTN3</accession>